<comment type="function">
    <text evidence="1">D-aminoacyl-tRNA deacylase with broad substrate specificity. By recycling D-aminoacyl-tRNA to D-amino acids and free tRNA molecules, this enzyme counteracts the toxicity associated with the formation of D-aminoacyl-tRNA entities in vivo.</text>
</comment>
<comment type="catalytic activity">
    <reaction evidence="1">
        <text>a D-aminoacyl-tRNA + H2O = a tRNA + a D-alpha-amino acid + H(+)</text>
        <dbReference type="Rhea" id="RHEA:13953"/>
        <dbReference type="Rhea" id="RHEA-COMP:10123"/>
        <dbReference type="Rhea" id="RHEA-COMP:10124"/>
        <dbReference type="ChEBI" id="CHEBI:15377"/>
        <dbReference type="ChEBI" id="CHEBI:15378"/>
        <dbReference type="ChEBI" id="CHEBI:59871"/>
        <dbReference type="ChEBI" id="CHEBI:78442"/>
        <dbReference type="ChEBI" id="CHEBI:79333"/>
        <dbReference type="EC" id="3.1.1.96"/>
    </reaction>
</comment>
<comment type="catalytic activity">
    <reaction evidence="1">
        <text>glycyl-tRNA(Ala) + H2O = tRNA(Ala) + glycine + H(+)</text>
        <dbReference type="Rhea" id="RHEA:53744"/>
        <dbReference type="Rhea" id="RHEA-COMP:9657"/>
        <dbReference type="Rhea" id="RHEA-COMP:13640"/>
        <dbReference type="ChEBI" id="CHEBI:15377"/>
        <dbReference type="ChEBI" id="CHEBI:15378"/>
        <dbReference type="ChEBI" id="CHEBI:57305"/>
        <dbReference type="ChEBI" id="CHEBI:78442"/>
        <dbReference type="ChEBI" id="CHEBI:78522"/>
        <dbReference type="EC" id="3.1.1.96"/>
    </reaction>
</comment>
<comment type="cofactor">
    <cofactor evidence="1">
        <name>Zn(2+)</name>
        <dbReference type="ChEBI" id="CHEBI:29105"/>
    </cofactor>
    <text evidence="1">Binds 2 Zn(2+) ions per subunit.</text>
</comment>
<comment type="subunit">
    <text evidence="1">Monomer.</text>
</comment>
<comment type="similarity">
    <text evidence="1">Belongs to the DtdA deacylase family.</text>
</comment>
<keyword id="KW-0378">Hydrolase</keyword>
<keyword id="KW-0479">Metal-binding</keyword>
<keyword id="KW-1185">Reference proteome</keyword>
<keyword id="KW-0862">Zinc</keyword>
<reference key="1">
    <citation type="journal article" date="1999" name="Genetics">
        <title>Divergence of the hyperthermophilic archaea Pyrococcus furiosus and P. horikoshii inferred from complete genomic sequences.</title>
        <authorList>
            <person name="Maeder D.L."/>
            <person name="Weiss R.B."/>
            <person name="Dunn D.M."/>
            <person name="Cherry J.L."/>
            <person name="Gonzalez J.M."/>
            <person name="DiRuggiero J."/>
            <person name="Robb F.T."/>
        </authorList>
    </citation>
    <scope>NUCLEOTIDE SEQUENCE [LARGE SCALE GENOMIC DNA]</scope>
    <source>
        <strain>ATCC 43587 / DSM 3638 / JCM 8422 / Vc1</strain>
    </source>
</reference>
<sequence>MKVIMTTKIDKASMNIREKLIENFGFTESNLTFDGNRVYEKEDILILTTNEEMIYYDYLDKEIEKQTKIKPEVIVFASRHSSAKKLPSLTTHVTGNWGKAMYGGKDESFAIAFPSAMKLALLKMHELNDLGWTVCYEATHHGPSELEVPSLFIEIGSSEEEWVNDRAGEIIAETIMYVLKKREKFKVALGIGGGHYAPKQTKVALESDLAFSHILPKYAQPVKKEVILRALSRSTEEVEAIYVDWKGSRGETRQLAKELANELGLEFIKD</sequence>
<evidence type="ECO:0000255" key="1">
    <source>
        <dbReference type="HAMAP-Rule" id="MF_00562"/>
    </source>
</evidence>
<gene>
    <name evidence="1" type="primary">dtdA</name>
    <name type="ordered locus">PF1982</name>
</gene>
<name>DTDA_PYRFU</name>
<feature type="chain" id="PRO_0000158971" description="D-aminoacyl-tRNA deacylase">
    <location>
        <begin position="1"/>
        <end position="270"/>
    </location>
</feature>
<dbReference type="EC" id="3.1.1.96" evidence="1"/>
<dbReference type="EMBL" id="AE009950">
    <property type="protein sequence ID" value="AAL82106.1"/>
    <property type="molecule type" value="Genomic_DNA"/>
</dbReference>
<dbReference type="RefSeq" id="WP_011013124.1">
    <property type="nucleotide sequence ID" value="NZ_CP023154.1"/>
</dbReference>
<dbReference type="SMR" id="P58852"/>
<dbReference type="STRING" id="186497.PF1982"/>
<dbReference type="PaxDb" id="186497-PF1982"/>
<dbReference type="KEGG" id="pfu:PF1982"/>
<dbReference type="PATRIC" id="fig|186497.12.peg.2055"/>
<dbReference type="eggNOG" id="arCOG01616">
    <property type="taxonomic scope" value="Archaea"/>
</dbReference>
<dbReference type="HOGENOM" id="CLU_056464_1_0_2"/>
<dbReference type="OrthoDB" id="9863at2157"/>
<dbReference type="PhylomeDB" id="P58852"/>
<dbReference type="Proteomes" id="UP000001013">
    <property type="component" value="Chromosome"/>
</dbReference>
<dbReference type="GO" id="GO:0051499">
    <property type="term" value="F:D-aminoacyl-tRNA deacylase activity"/>
    <property type="evidence" value="ECO:0007669"/>
    <property type="project" value="UniProtKB-UniRule"/>
</dbReference>
<dbReference type="GO" id="GO:0008270">
    <property type="term" value="F:zinc ion binding"/>
    <property type="evidence" value="ECO:0007669"/>
    <property type="project" value="UniProtKB-UniRule"/>
</dbReference>
<dbReference type="GO" id="GO:0019478">
    <property type="term" value="P:D-amino acid catabolic process"/>
    <property type="evidence" value="ECO:0007669"/>
    <property type="project" value="UniProtKB-UniRule"/>
</dbReference>
<dbReference type="Gene3D" id="3.40.50.10700">
    <property type="entry name" value="AF0625-like"/>
    <property type="match status" value="1"/>
</dbReference>
<dbReference type="Gene3D" id="3.40.630.50">
    <property type="entry name" value="AF0625-like"/>
    <property type="match status" value="1"/>
</dbReference>
<dbReference type="HAMAP" id="MF_00562">
    <property type="entry name" value="Deacylase_DtdA"/>
    <property type="match status" value="1"/>
</dbReference>
<dbReference type="InterPro" id="IPR018033">
    <property type="entry name" value="Deacylase_DtdA_archaea"/>
</dbReference>
<dbReference type="InterPro" id="IPR007508">
    <property type="entry name" value="DtdA"/>
</dbReference>
<dbReference type="NCBIfam" id="NF003072">
    <property type="entry name" value="PRK03995.1-4"/>
    <property type="match status" value="1"/>
</dbReference>
<dbReference type="NCBIfam" id="NF003074">
    <property type="entry name" value="PRK03995.1-6"/>
    <property type="match status" value="1"/>
</dbReference>
<dbReference type="PANTHER" id="PTHR34667">
    <property type="entry name" value="D-AMINOACYL-TRNA DEACYLASE"/>
    <property type="match status" value="1"/>
</dbReference>
<dbReference type="PANTHER" id="PTHR34667:SF1">
    <property type="entry name" value="D-AMINOACYL-TRNA DEACYLASE"/>
    <property type="match status" value="1"/>
</dbReference>
<dbReference type="Pfam" id="PF04414">
    <property type="entry name" value="tRNA_deacylase"/>
    <property type="match status" value="1"/>
</dbReference>
<dbReference type="PIRSF" id="PIRSF016210">
    <property type="entry name" value="UCP016210"/>
    <property type="match status" value="1"/>
</dbReference>
<dbReference type="SUPFAM" id="SSF142535">
    <property type="entry name" value="AF0625-like"/>
    <property type="match status" value="1"/>
</dbReference>
<proteinExistence type="inferred from homology"/>
<accession>P58852</accession>
<protein>
    <recommendedName>
        <fullName evidence="1">D-aminoacyl-tRNA deacylase</fullName>
        <ecNumber evidence="1">3.1.1.96</ecNumber>
    </recommendedName>
    <alternativeName>
        <fullName>D-tyrosyl-tRNA(Tyr) deacylase</fullName>
    </alternativeName>
</protein>
<organism>
    <name type="scientific">Pyrococcus furiosus (strain ATCC 43587 / DSM 3638 / JCM 8422 / Vc1)</name>
    <dbReference type="NCBI Taxonomy" id="186497"/>
    <lineage>
        <taxon>Archaea</taxon>
        <taxon>Methanobacteriati</taxon>
        <taxon>Methanobacteriota</taxon>
        <taxon>Thermococci</taxon>
        <taxon>Thermococcales</taxon>
        <taxon>Thermococcaceae</taxon>
        <taxon>Pyrococcus</taxon>
    </lineage>
</organism>